<evidence type="ECO:0000250" key="1"/>
<evidence type="ECO:0000305" key="2"/>
<organism>
    <name type="scientific">Xenopus laevis</name>
    <name type="common">African clawed frog</name>
    <dbReference type="NCBI Taxonomy" id="8355"/>
    <lineage>
        <taxon>Eukaryota</taxon>
        <taxon>Metazoa</taxon>
        <taxon>Chordata</taxon>
        <taxon>Craniata</taxon>
        <taxon>Vertebrata</taxon>
        <taxon>Euteleostomi</taxon>
        <taxon>Amphibia</taxon>
        <taxon>Batrachia</taxon>
        <taxon>Anura</taxon>
        <taxon>Pipoidea</taxon>
        <taxon>Pipidae</taxon>
        <taxon>Xenopodinae</taxon>
        <taxon>Xenopus</taxon>
        <taxon>Xenopus</taxon>
    </lineage>
</organism>
<reference key="1">
    <citation type="submission" date="2003-03" db="EMBL/GenBank/DDBJ databases">
        <authorList>
            <consortium name="NIH - Xenopus Gene Collection (XGC) project"/>
        </authorList>
    </citation>
    <scope>NUCLEOTIDE SEQUENCE [LARGE SCALE MRNA]</scope>
    <source>
        <tissue>Embryo</tissue>
    </source>
</reference>
<protein>
    <recommendedName>
        <fullName>MIF4G domain-containing protein B</fullName>
    </recommendedName>
</protein>
<keyword id="KW-0963">Cytoplasm</keyword>
<keyword id="KW-0539">Nucleus</keyword>
<keyword id="KW-1185">Reference proteome</keyword>
<keyword id="KW-0810">Translation regulation</keyword>
<name>M4GDB_XENLA</name>
<feature type="chain" id="PRO_0000337095" description="MIF4G domain-containing protein B">
    <location>
        <begin position="1"/>
        <end position="223"/>
    </location>
</feature>
<feature type="domain" description="MIF4G">
    <location>
        <begin position="9"/>
        <end position="206"/>
    </location>
</feature>
<accession>Q801N6</accession>
<dbReference type="EMBL" id="BC048773">
    <property type="protein sequence ID" value="AAH48773.1"/>
    <property type="molecule type" value="mRNA"/>
</dbReference>
<dbReference type="RefSeq" id="NP_001079711.1">
    <property type="nucleotide sequence ID" value="NM_001086242.1"/>
</dbReference>
<dbReference type="SMR" id="Q801N6"/>
<dbReference type="ComplexPortal" id="CPX-1311">
    <property type="entry name" value="SLBP1-SLIP1 complex"/>
</dbReference>
<dbReference type="DNASU" id="379398"/>
<dbReference type="GeneID" id="379398"/>
<dbReference type="KEGG" id="xla:379398"/>
<dbReference type="AGR" id="Xenbase:XB-GENE-6256062"/>
<dbReference type="CTD" id="379398"/>
<dbReference type="Xenbase" id="XB-GENE-6256062">
    <property type="gene designation" value="mif4gd.S"/>
</dbReference>
<dbReference type="OMA" id="PCCSCTG"/>
<dbReference type="OrthoDB" id="6357832at2759"/>
<dbReference type="Proteomes" id="UP000186698">
    <property type="component" value="Chromosome 9_10S"/>
</dbReference>
<dbReference type="Bgee" id="379398">
    <property type="expression patterns" value="Expressed in muscle tissue and 19 other cell types or tissues"/>
</dbReference>
<dbReference type="GO" id="GO:0005737">
    <property type="term" value="C:cytoplasm"/>
    <property type="evidence" value="ECO:0000303"/>
    <property type="project" value="ComplexPortal"/>
</dbReference>
<dbReference type="GO" id="GO:0005829">
    <property type="term" value="C:cytosol"/>
    <property type="evidence" value="ECO:0000318"/>
    <property type="project" value="GO_Central"/>
</dbReference>
<dbReference type="GO" id="GO:0062073">
    <property type="term" value="C:histone mRNA stem-loop binding complex"/>
    <property type="evidence" value="ECO:0000303"/>
    <property type="project" value="ComplexPortal"/>
</dbReference>
<dbReference type="GO" id="GO:0005634">
    <property type="term" value="C:nucleus"/>
    <property type="evidence" value="ECO:0007669"/>
    <property type="project" value="UniProtKB-SubCell"/>
</dbReference>
<dbReference type="GO" id="GO:0003723">
    <property type="term" value="F:RNA binding"/>
    <property type="evidence" value="ECO:0007669"/>
    <property type="project" value="InterPro"/>
</dbReference>
<dbReference type="GO" id="GO:0008494">
    <property type="term" value="F:translation activator activity"/>
    <property type="evidence" value="ECO:0000318"/>
    <property type="project" value="GO_Central"/>
</dbReference>
<dbReference type="GO" id="GO:0002191">
    <property type="term" value="P:cap-dependent translational initiation"/>
    <property type="evidence" value="ECO:0000303"/>
    <property type="project" value="ComplexPortal"/>
</dbReference>
<dbReference type="GO" id="GO:0006446">
    <property type="term" value="P:regulation of translational initiation"/>
    <property type="evidence" value="ECO:0000318"/>
    <property type="project" value="GO_Central"/>
</dbReference>
<dbReference type="FunFam" id="1.25.40.180:FF:000108">
    <property type="entry name" value="MIF4G domain-containing protein A"/>
    <property type="match status" value="1"/>
</dbReference>
<dbReference type="Gene3D" id="1.25.40.180">
    <property type="match status" value="1"/>
</dbReference>
<dbReference type="InterPro" id="IPR016024">
    <property type="entry name" value="ARM-type_fold"/>
</dbReference>
<dbReference type="InterPro" id="IPR003890">
    <property type="entry name" value="MIF4G-like_typ-3"/>
</dbReference>
<dbReference type="InterPro" id="IPR051367">
    <property type="entry name" value="mRNA_TranslReg/HistoneTransl"/>
</dbReference>
<dbReference type="PANTHER" id="PTHR23254">
    <property type="entry name" value="EIF4G DOMAIN PROTEIN"/>
    <property type="match status" value="1"/>
</dbReference>
<dbReference type="PANTHER" id="PTHR23254:SF17">
    <property type="entry name" value="MIF4G DOMAIN-CONTAINING PROTEIN"/>
    <property type="match status" value="1"/>
</dbReference>
<dbReference type="Pfam" id="PF02854">
    <property type="entry name" value="MIF4G"/>
    <property type="match status" value="1"/>
</dbReference>
<dbReference type="SUPFAM" id="SSF48371">
    <property type="entry name" value="ARM repeat"/>
    <property type="match status" value="1"/>
</dbReference>
<proteinExistence type="evidence at transcript level"/>
<comment type="function">
    <text evidence="1">Functions in replication-dependent translation of histone mRNAs which differ from other eukaryotic mRNAs in that they do not end with a poly-A tail but a stem-loop. May participate in circularizing those mRNAs specifically enhancing their translation (By similarity).</text>
</comment>
<comment type="subunit">
    <text evidence="1">Interacts with eif4g1, eif4g2 and slbp; probably tethered by SLBP to the 3'-end of mRNAs ending with the histone stem-loop, it also interacts with eif4g1 which is bound to their 5'-end.</text>
</comment>
<comment type="subcellular location">
    <subcellularLocation>
        <location evidence="1">Cytoplasm</location>
    </subcellularLocation>
    <subcellularLocation>
        <location evidence="1">Nucleus</location>
    </subcellularLocation>
</comment>
<comment type="similarity">
    <text evidence="2">Belongs to the MIF4GD family.</text>
</comment>
<gene>
    <name type="primary">mif4gd-b</name>
</gene>
<sequence>MADSEEQEDYKIQGFDADIQNLLKTALKEPGSVDLEKAANVIVDQSLRDSTFSREAGRMCYTIIQVESKQTGCTMFRSSLLNRLQVEYRNRKETRARSLQEWVCYVGFMCNVFDYLRVNNMPMLALVNPVYDCLFDLVQPDSLKKEVEVDCLVLQLHRVGEQLEKMNCQRMDELFSQLRDGFLLQGGLSSLTQLLLLEMIEYRAAGWSMTDAAQKYYYSEVSD</sequence>